<name>MATK_PSINU</name>
<comment type="function">
    <text evidence="1">Usually encoded in the trnK tRNA gene intron. Probably assists in splicing its own and other chloroplast group II introns.</text>
</comment>
<comment type="subcellular location">
    <subcellularLocation>
        <location>Plastid</location>
        <location>Chloroplast</location>
    </subcellularLocation>
</comment>
<comment type="similarity">
    <text evidence="1">Belongs to the intron maturase 2 family. MatK subfamily.</text>
</comment>
<dbReference type="EMBL" id="AP004638">
    <property type="protein sequence ID" value="BAB84196.1"/>
    <property type="molecule type" value="Genomic_DNA"/>
</dbReference>
<dbReference type="RefSeq" id="NP_569609.1">
    <property type="nucleotide sequence ID" value="NC_003386.1"/>
</dbReference>
<dbReference type="SMR" id="Q8WI35"/>
<dbReference type="GeneID" id="2545113"/>
<dbReference type="GO" id="GO:0009507">
    <property type="term" value="C:chloroplast"/>
    <property type="evidence" value="ECO:0007669"/>
    <property type="project" value="UniProtKB-SubCell"/>
</dbReference>
<dbReference type="GO" id="GO:0003723">
    <property type="term" value="F:RNA binding"/>
    <property type="evidence" value="ECO:0007669"/>
    <property type="project" value="UniProtKB-KW"/>
</dbReference>
<dbReference type="GO" id="GO:0006397">
    <property type="term" value="P:mRNA processing"/>
    <property type="evidence" value="ECO:0007669"/>
    <property type="project" value="UniProtKB-KW"/>
</dbReference>
<dbReference type="GO" id="GO:0008380">
    <property type="term" value="P:RNA splicing"/>
    <property type="evidence" value="ECO:0007669"/>
    <property type="project" value="UniProtKB-UniRule"/>
</dbReference>
<dbReference type="GO" id="GO:0008033">
    <property type="term" value="P:tRNA processing"/>
    <property type="evidence" value="ECO:0007669"/>
    <property type="project" value="UniProtKB-KW"/>
</dbReference>
<dbReference type="HAMAP" id="MF_01390">
    <property type="entry name" value="MatK"/>
    <property type="match status" value="1"/>
</dbReference>
<dbReference type="InterPro" id="IPR024937">
    <property type="entry name" value="Domain_X"/>
</dbReference>
<dbReference type="InterPro" id="IPR002866">
    <property type="entry name" value="Maturase_MatK"/>
</dbReference>
<dbReference type="InterPro" id="IPR024942">
    <property type="entry name" value="Maturase_MatK_N"/>
</dbReference>
<dbReference type="PANTHER" id="PTHR34811">
    <property type="entry name" value="MATURASE K"/>
    <property type="match status" value="1"/>
</dbReference>
<dbReference type="PANTHER" id="PTHR34811:SF1">
    <property type="entry name" value="MATURASE K"/>
    <property type="match status" value="1"/>
</dbReference>
<dbReference type="Pfam" id="PF01348">
    <property type="entry name" value="Intron_maturas2"/>
    <property type="match status" value="1"/>
</dbReference>
<dbReference type="Pfam" id="PF01824">
    <property type="entry name" value="MatK_N"/>
    <property type="match status" value="1"/>
</dbReference>
<protein>
    <recommendedName>
        <fullName evidence="1">Maturase K</fullName>
    </recommendedName>
    <alternativeName>
        <fullName evidence="1">Intron maturase</fullName>
    </alternativeName>
</protein>
<accession>Q8WI35</accession>
<evidence type="ECO:0000255" key="1">
    <source>
        <dbReference type="HAMAP-Rule" id="MF_01390"/>
    </source>
</evidence>
<keyword id="KW-0150">Chloroplast</keyword>
<keyword id="KW-0507">mRNA processing</keyword>
<keyword id="KW-0934">Plastid</keyword>
<keyword id="KW-0694">RNA-binding</keyword>
<keyword id="KW-0819">tRNA processing</keyword>
<proteinExistence type="inferred from homology"/>
<reference key="1">
    <citation type="journal article" date="2004" name="Mol. Biol. Evol.">
        <title>Chloroplast phylogeny indicates that bryophytes are monophyletic.</title>
        <authorList>
            <person name="Nishiyama T."/>
            <person name="Wolf P.G."/>
            <person name="Kugita M."/>
            <person name="Sinclair R.B."/>
            <person name="Sugita M."/>
            <person name="Sugiura C."/>
            <person name="Wakasugi T."/>
            <person name="Yamada K."/>
            <person name="Yoshinaga K."/>
            <person name="Yamaguchi K."/>
            <person name="Ueda K."/>
            <person name="Hasebe M."/>
        </authorList>
    </citation>
    <scope>NUCLEOTIDE SEQUENCE [LARGE SCALE GENOMIC DNA]</scope>
    <source>
        <strain>Kingyoku</strain>
    </source>
</reference>
<sequence length="503" mass="59831">MRTINKILDKIGKVQKGKSLLWQLYPLLFREDLYAIAYNRSSSELSLKSMKHRDSSDRYSLVIIKRLINRIRNQTTSKLLFQGSDRKNLKINRSLFEGLTVLFEMIIPVESRPLVQYQSEWNSLQSIHSIFLFMEDRFFYSNSILGLKIPYYFHPEMIIRLFRRRIKDVFLLHLVRLLFHNYQNPFVPETSLFYSLKDSQKRLSILLRNHYFYEFENQLVPLWKRFVQLQSLSHRFLMDQTNPLYKMKHGLGSLQPFLSEINLLETPCIHYVRYENHSIIAFKGTKSIVNKWIKYLVGFWQYNYHYWLQPCQIDIRRPSRRCFSFMGYILGFRSRMIKVHTKRIDESSTTHCIIKEFCASIPTSSLIESLTREGFCDSSGRPVGRSTWTILKDDDILNKYHQIWGDLSCYYSGSFSRDGLWRAKYILQLSCAKTLAQKHKSTTRVVRNHFGLKFITTLNSVKNPFFIGSQEYSHRKNFWCLDIIRMNSLVNLINMKKESLSSS</sequence>
<organism>
    <name type="scientific">Psilotum nudum</name>
    <name type="common">Whisk fern</name>
    <name type="synonym">Lycopodium nudum</name>
    <dbReference type="NCBI Taxonomy" id="3240"/>
    <lineage>
        <taxon>Eukaryota</taxon>
        <taxon>Viridiplantae</taxon>
        <taxon>Streptophyta</taxon>
        <taxon>Embryophyta</taxon>
        <taxon>Tracheophyta</taxon>
        <taxon>Polypodiopsida</taxon>
        <taxon>Ophioglossidae</taxon>
        <taxon>Psilotales</taxon>
        <taxon>Psilotaceae</taxon>
        <taxon>Psilotum</taxon>
    </lineage>
</organism>
<feature type="chain" id="PRO_0000143657" description="Maturase K">
    <location>
        <begin position="1"/>
        <end position="503"/>
    </location>
</feature>
<gene>
    <name evidence="1" type="primary">matK</name>
</gene>
<geneLocation type="chloroplast"/>